<comment type="function">
    <text evidence="1">Reduces arsenate [As(V)] to arsenite [As(III)].</text>
</comment>
<comment type="induction">
    <text evidence="2">Weakly induced by arsenite, antimonite and arsenate.</text>
</comment>
<comment type="disruption phenotype">
    <text evidence="2">Deletion of the arsADRC operon results in increased sensitivity to arsenite and antimonite but not arsenate.</text>
</comment>
<comment type="miscellaneous">
    <text evidence="4">As expression is low no effect on arsenate resistance has been found.</text>
</comment>
<comment type="similarity">
    <text evidence="3">Belongs to the low molecular weight phosphotyrosine protein phosphatase family.</text>
</comment>
<protein>
    <recommendedName>
        <fullName>Putative arsenate reductase</fullName>
        <ecNumber>1.20.4.-</ecNumber>
    </recommendedName>
</protein>
<name>ARSC_HALSA</name>
<geneLocation type="plasmid">
    <name>pNRC100</name>
</geneLocation>
<organism>
    <name type="scientific">Halobacterium salinarum (strain ATCC 700922 / JCM 11081 / NRC-1)</name>
    <name type="common">Halobacterium halobium</name>
    <dbReference type="NCBI Taxonomy" id="64091"/>
    <lineage>
        <taxon>Archaea</taxon>
        <taxon>Methanobacteriati</taxon>
        <taxon>Methanobacteriota</taxon>
        <taxon>Stenosarchaea group</taxon>
        <taxon>Halobacteria</taxon>
        <taxon>Halobacteriales</taxon>
        <taxon>Halobacteriaceae</taxon>
        <taxon>Halobacterium</taxon>
        <taxon>Halobacterium salinarum NRC-34001</taxon>
    </lineage>
</organism>
<evidence type="ECO:0000250" key="1"/>
<evidence type="ECO:0000269" key="2">
    <source>
    </source>
</evidence>
<evidence type="ECO:0000305" key="3"/>
<evidence type="ECO:0000305" key="4">
    <source>
    </source>
</evidence>
<reference key="1">
    <citation type="journal article" date="1998" name="Genome Res.">
        <title>Snapshot of a large dynamic replicon in a halophilic archaeon: megaplasmid or minichromosome?</title>
        <authorList>
            <person name="Ng W.V."/>
            <person name="Ciufo S.A."/>
            <person name="Smith T.M."/>
            <person name="Bumgarner R.E."/>
            <person name="Baskin D."/>
            <person name="Faust J."/>
            <person name="Hall B."/>
            <person name="Loretz C."/>
            <person name="Seto J."/>
            <person name="Slagel J."/>
            <person name="Hood L."/>
            <person name="DasSarma S."/>
        </authorList>
    </citation>
    <scope>NUCLEOTIDE SEQUENCE [LARGE SCALE GENOMIC DNA]</scope>
    <source>
        <strain>ATCC 700922 / JCM 11081 / NRC-1</strain>
    </source>
</reference>
<reference key="2">
    <citation type="journal article" date="2000" name="Proc. Natl. Acad. Sci. U.S.A.">
        <title>Genome sequence of Halobacterium species NRC-1.</title>
        <authorList>
            <person name="Ng W.V."/>
            <person name="Kennedy S.P."/>
            <person name="Mahairas G.G."/>
            <person name="Berquist B."/>
            <person name="Pan M."/>
            <person name="Shukla H.D."/>
            <person name="Lasky S.R."/>
            <person name="Baliga N.S."/>
            <person name="Thorsson V."/>
            <person name="Sbrogna J."/>
            <person name="Swartzell S."/>
            <person name="Weir D."/>
            <person name="Hall J."/>
            <person name="Dahl T.A."/>
            <person name="Welti R."/>
            <person name="Goo Y.A."/>
            <person name="Leithauser B."/>
            <person name="Keller K."/>
            <person name="Cruz R."/>
            <person name="Danson M.J."/>
            <person name="Hough D.W."/>
            <person name="Maddocks D.G."/>
            <person name="Jablonski P.E."/>
            <person name="Krebs M.P."/>
            <person name="Angevine C.M."/>
            <person name="Dale H."/>
            <person name="Isenbarger T.A."/>
            <person name="Peck R.F."/>
            <person name="Pohlschroder M."/>
            <person name="Spudich J.L."/>
            <person name="Jung K.-H."/>
            <person name="Alam M."/>
            <person name="Freitas T."/>
            <person name="Hou S."/>
            <person name="Daniels C.J."/>
            <person name="Dennis P.P."/>
            <person name="Omer A.D."/>
            <person name="Ebhardt H."/>
            <person name="Lowe T.M."/>
            <person name="Liang P."/>
            <person name="Riley M."/>
            <person name="Hood L."/>
            <person name="DasSarma S."/>
        </authorList>
    </citation>
    <scope>NUCLEOTIDE SEQUENCE [LARGE SCALE GENOMIC DNA]</scope>
    <source>
        <strain>ATCC 700922 / JCM 11081 / NRC-1</strain>
    </source>
</reference>
<reference key="3">
    <citation type="journal article" date="2004" name="J. Bacteriol.">
        <title>Arsenic resistance in Halobacterium sp. strain NRC-1 examined by using an improved gene knockout system.</title>
        <authorList>
            <person name="Wang G."/>
            <person name="Kennedy S.P."/>
            <person name="Fasiludeen S."/>
            <person name="Rensing C."/>
            <person name="DasSarma S."/>
        </authorList>
    </citation>
    <scope>INDUCTION</scope>
    <scope>DISRUPTION PHENOTYPE</scope>
    <source>
        <strain>ATCC 700922 / JCM 11081 / NRC-1</strain>
    </source>
</reference>
<proteinExistence type="evidence at transcript level"/>
<sequence>MSADSTTKFGFVCVQNAGRSQMSTAFAERERERRDLEDSVEILTGGTHPADHVHEEVVEVMGEEGFDLSERTPREVSTDELESCDIVATMGCSTLELDAETVDVRDWALDDPDGQEMEQVREIRDDIEQRVVDLFDEFNPDD</sequence>
<accession>O52030</accession>
<gene>
    <name type="primary">arsC</name>
    <name type="ordered locus">VNG_5183G</name>
</gene>
<keyword id="KW-0059">Arsenical resistance</keyword>
<keyword id="KW-0560">Oxidoreductase</keyword>
<keyword id="KW-0614">Plasmid</keyword>
<keyword id="KW-1185">Reference proteome</keyword>
<dbReference type="EC" id="1.20.4.-"/>
<dbReference type="EMBL" id="AF016485">
    <property type="protein sequence ID" value="AAC82910.1"/>
    <property type="molecule type" value="Genomic_DNA"/>
</dbReference>
<dbReference type="PIR" id="T08343">
    <property type="entry name" value="T08343"/>
</dbReference>
<dbReference type="RefSeq" id="WP_010890456.1">
    <property type="nucleotide sequence ID" value="NZ_BK010830.1"/>
</dbReference>
<dbReference type="SMR" id="O52030"/>
<dbReference type="KEGG" id="hal:AAC82910.1"/>
<dbReference type="HOGENOM" id="CLU_071415_3_3_2"/>
<dbReference type="InParanoid" id="O52030"/>
<dbReference type="OrthoDB" id="295776at2157"/>
<dbReference type="PhylomeDB" id="O52030"/>
<dbReference type="Proteomes" id="UP000000554">
    <property type="component" value="Plasmid pNRC100"/>
</dbReference>
<dbReference type="GO" id="GO:0016491">
    <property type="term" value="F:oxidoreductase activity"/>
    <property type="evidence" value="ECO:0007669"/>
    <property type="project" value="UniProtKB-KW"/>
</dbReference>
<dbReference type="GO" id="GO:0046685">
    <property type="term" value="P:response to arsenic-containing substance"/>
    <property type="evidence" value="ECO:0007669"/>
    <property type="project" value="UniProtKB-KW"/>
</dbReference>
<dbReference type="Gene3D" id="3.40.50.2300">
    <property type="match status" value="1"/>
</dbReference>
<dbReference type="InterPro" id="IPR023485">
    <property type="entry name" value="Ptyr_pPase"/>
</dbReference>
<dbReference type="InterPro" id="IPR036196">
    <property type="entry name" value="Ptyr_pPase_sf"/>
</dbReference>
<dbReference type="PANTHER" id="PTHR43428">
    <property type="entry name" value="ARSENATE REDUCTASE"/>
    <property type="match status" value="1"/>
</dbReference>
<dbReference type="PANTHER" id="PTHR43428:SF1">
    <property type="entry name" value="ARSENATE REDUCTASE"/>
    <property type="match status" value="1"/>
</dbReference>
<dbReference type="Pfam" id="PF01451">
    <property type="entry name" value="LMWPc"/>
    <property type="match status" value="1"/>
</dbReference>
<dbReference type="SMART" id="SM00226">
    <property type="entry name" value="LMWPc"/>
    <property type="match status" value="1"/>
</dbReference>
<dbReference type="SUPFAM" id="SSF52788">
    <property type="entry name" value="Phosphotyrosine protein phosphatases I"/>
    <property type="match status" value="1"/>
</dbReference>
<feature type="chain" id="PRO_0000429116" description="Putative arsenate reductase">
    <location>
        <begin position="1"/>
        <end position="142"/>
    </location>
</feature>